<gene>
    <name evidence="1" type="primary">vapC1</name>
    <name type="ordered locus">MJ0914</name>
</gene>
<reference key="1">
    <citation type="journal article" date="1996" name="Science">
        <title>Complete genome sequence of the methanogenic archaeon, Methanococcus jannaschii.</title>
        <authorList>
            <person name="Bult C.J."/>
            <person name="White O."/>
            <person name="Olsen G.J."/>
            <person name="Zhou L."/>
            <person name="Fleischmann R.D."/>
            <person name="Sutton G.G."/>
            <person name="Blake J.A."/>
            <person name="FitzGerald L.M."/>
            <person name="Clayton R.A."/>
            <person name="Gocayne J.D."/>
            <person name="Kerlavage A.R."/>
            <person name="Dougherty B.A."/>
            <person name="Tomb J.-F."/>
            <person name="Adams M.D."/>
            <person name="Reich C.I."/>
            <person name="Overbeek R."/>
            <person name="Kirkness E.F."/>
            <person name="Weinstock K.G."/>
            <person name="Merrick J.M."/>
            <person name="Glodek A."/>
            <person name="Scott J.L."/>
            <person name="Geoghagen N.S.M."/>
            <person name="Weidman J.F."/>
            <person name="Fuhrmann J.L."/>
            <person name="Nguyen D."/>
            <person name="Utterback T.R."/>
            <person name="Kelley J.M."/>
            <person name="Peterson J.D."/>
            <person name="Sadow P.W."/>
            <person name="Hanna M.C."/>
            <person name="Cotton M.D."/>
            <person name="Roberts K.M."/>
            <person name="Hurst M.A."/>
            <person name="Kaine B.P."/>
            <person name="Borodovsky M."/>
            <person name="Klenk H.-P."/>
            <person name="Fraser C.M."/>
            <person name="Smith H.O."/>
            <person name="Woese C.R."/>
            <person name="Venter J.C."/>
        </authorList>
    </citation>
    <scope>NUCLEOTIDE SEQUENCE [LARGE SCALE GENOMIC DNA]</scope>
    <source>
        <strain>ATCC 43067 / DSM 2661 / JAL-1 / JCM 10045 / NBRC 100440</strain>
    </source>
</reference>
<reference key="2">
    <citation type="journal article" date="2005" name="Nucleic Acids Res.">
        <title>Toxin-antitoxin loci are highly abundant in free-living but lost from host-associated prokaryotes.</title>
        <authorList>
            <person name="Pandey D.P."/>
            <person name="Gerdes K."/>
        </authorList>
    </citation>
    <scope>IDENTIFICATION</scope>
    <scope>POSSIBLE FUNCTION</scope>
    <source>
        <strain>ATCC 43067 / DSM 2661 / JAL-1 / JCM 10045 / NBRC 100440</strain>
    </source>
</reference>
<organism>
    <name type="scientific">Methanocaldococcus jannaschii (strain ATCC 43067 / DSM 2661 / JAL-1 / JCM 10045 / NBRC 100440)</name>
    <name type="common">Methanococcus jannaschii</name>
    <dbReference type="NCBI Taxonomy" id="243232"/>
    <lineage>
        <taxon>Archaea</taxon>
        <taxon>Methanobacteriati</taxon>
        <taxon>Methanobacteriota</taxon>
        <taxon>Methanomada group</taxon>
        <taxon>Methanococci</taxon>
        <taxon>Methanococcales</taxon>
        <taxon>Methanocaldococcaceae</taxon>
        <taxon>Methanocaldococcus</taxon>
    </lineage>
</organism>
<sequence length="136" mass="16210">MKILKKLKKKLEKEESKILVDTSVLIDYFKKRRLEELGGEAISIITAVEFIRGISEHKQEQVLNIFKELFEIVYIDEEIIIPFSKIYRQLKKRGMLIDDADLYIACTAIIKNYPLWTKNKKHFERLKEFGLKIYDK</sequence>
<evidence type="ECO:0000255" key="1">
    <source>
        <dbReference type="HAMAP-Rule" id="MF_00265"/>
    </source>
</evidence>
<proteinExistence type="inferred from homology"/>
<comment type="function">
    <text evidence="1">Toxic component of a type II toxin-antitoxin (TA) system. An RNase. Its cognate antitoxin is VapB1 (By similarity).</text>
</comment>
<comment type="cofactor">
    <cofactor evidence="1">
        <name>Mg(2+)</name>
        <dbReference type="ChEBI" id="CHEBI:18420"/>
    </cofactor>
</comment>
<comment type="similarity">
    <text evidence="1">Belongs to the PINc/VapC protein family.</text>
</comment>
<feature type="chain" id="PRO_0000107102" description="Ribonuclease VapC1">
    <location>
        <begin position="1"/>
        <end position="136"/>
    </location>
</feature>
<feature type="domain" description="PINc" evidence="1">
    <location>
        <begin position="18"/>
        <end position="129"/>
    </location>
</feature>
<feature type="binding site" evidence="1">
    <location>
        <position position="21"/>
    </location>
    <ligand>
        <name>Mg(2+)</name>
        <dbReference type="ChEBI" id="CHEBI:18420"/>
    </ligand>
</feature>
<feature type="binding site" evidence="1">
    <location>
        <position position="101"/>
    </location>
    <ligand>
        <name>Mg(2+)</name>
        <dbReference type="ChEBI" id="CHEBI:18420"/>
    </ligand>
</feature>
<protein>
    <recommendedName>
        <fullName evidence="1">Ribonuclease VapC1</fullName>
        <shortName evidence="1">RNase VapC1</shortName>
        <ecNumber evidence="1">3.1.-.-</ecNumber>
    </recommendedName>
    <alternativeName>
        <fullName evidence="1">Putative toxin VapC1</fullName>
    </alternativeName>
</protein>
<name>VAPC1_METJA</name>
<accession>Q58324</accession>
<dbReference type="EC" id="3.1.-.-" evidence="1"/>
<dbReference type="EMBL" id="L77117">
    <property type="protein sequence ID" value="AAB98919.1"/>
    <property type="molecule type" value="Genomic_DNA"/>
</dbReference>
<dbReference type="PIR" id="B64414">
    <property type="entry name" value="B64414"/>
</dbReference>
<dbReference type="RefSeq" id="WP_010870428.1">
    <property type="nucleotide sequence ID" value="NC_000909.1"/>
</dbReference>
<dbReference type="SMR" id="Q58324"/>
<dbReference type="PaxDb" id="243232-MJ_0914"/>
<dbReference type="EnsemblBacteria" id="AAB98919">
    <property type="protein sequence ID" value="AAB98919"/>
    <property type="gene ID" value="MJ_0914"/>
</dbReference>
<dbReference type="GeneID" id="1451803"/>
<dbReference type="KEGG" id="mja:MJ_0914"/>
<dbReference type="eggNOG" id="arCOG02219">
    <property type="taxonomic scope" value="Archaea"/>
</dbReference>
<dbReference type="HOGENOM" id="CLU_118482_3_1_2"/>
<dbReference type="InParanoid" id="Q58324"/>
<dbReference type="OrthoDB" id="38049at2157"/>
<dbReference type="PhylomeDB" id="Q58324"/>
<dbReference type="Proteomes" id="UP000000805">
    <property type="component" value="Chromosome"/>
</dbReference>
<dbReference type="GO" id="GO:0000287">
    <property type="term" value="F:magnesium ion binding"/>
    <property type="evidence" value="ECO:0007669"/>
    <property type="project" value="UniProtKB-UniRule"/>
</dbReference>
<dbReference type="GO" id="GO:0004540">
    <property type="term" value="F:RNA nuclease activity"/>
    <property type="evidence" value="ECO:0000318"/>
    <property type="project" value="GO_Central"/>
</dbReference>
<dbReference type="CDD" id="cd09881">
    <property type="entry name" value="PIN_VapC4-5_FitB-like"/>
    <property type="match status" value="1"/>
</dbReference>
<dbReference type="FunFam" id="3.40.50.1010:FF:000103">
    <property type="entry name" value="PilT protein domain protein"/>
    <property type="match status" value="1"/>
</dbReference>
<dbReference type="Gene3D" id="3.40.50.1010">
    <property type="entry name" value="5'-nuclease"/>
    <property type="match status" value="1"/>
</dbReference>
<dbReference type="HAMAP" id="MF_00265">
    <property type="entry name" value="VapC_Nob1"/>
    <property type="match status" value="1"/>
</dbReference>
<dbReference type="InterPro" id="IPR029060">
    <property type="entry name" value="PIN-like_dom_sf"/>
</dbReference>
<dbReference type="InterPro" id="IPR002716">
    <property type="entry name" value="PIN_dom"/>
</dbReference>
<dbReference type="InterPro" id="IPR051749">
    <property type="entry name" value="PINc/VapC_TA_RNase"/>
</dbReference>
<dbReference type="InterPro" id="IPR022907">
    <property type="entry name" value="VapC_family"/>
</dbReference>
<dbReference type="PANTHER" id="PTHR42740:SF2">
    <property type="entry name" value="RIBONUCLEASE VAPC1"/>
    <property type="match status" value="1"/>
</dbReference>
<dbReference type="PANTHER" id="PTHR42740">
    <property type="entry name" value="RIBONUCLEASE VAPC3"/>
    <property type="match status" value="1"/>
</dbReference>
<dbReference type="Pfam" id="PF01850">
    <property type="entry name" value="PIN"/>
    <property type="match status" value="1"/>
</dbReference>
<dbReference type="SUPFAM" id="SSF88723">
    <property type="entry name" value="PIN domain-like"/>
    <property type="match status" value="1"/>
</dbReference>
<keyword id="KW-0378">Hydrolase</keyword>
<keyword id="KW-0460">Magnesium</keyword>
<keyword id="KW-0479">Metal-binding</keyword>
<keyword id="KW-0540">Nuclease</keyword>
<keyword id="KW-1185">Reference proteome</keyword>
<keyword id="KW-1277">Toxin-antitoxin system</keyword>